<keyword id="KW-0378">Hydrolase</keyword>
<keyword id="KW-0479">Metal-binding</keyword>
<keyword id="KW-0665">Pyrimidine biosynthesis</keyword>
<keyword id="KW-1185">Reference proteome</keyword>
<keyword id="KW-0862">Zinc</keyword>
<proteinExistence type="inferred from homology"/>
<reference key="1">
    <citation type="journal article" date="2001" name="Proc. Natl. Acad. Sci. U.S.A.">
        <title>Analysis of the chromosome sequence of the legume symbiont Sinorhizobium meliloti strain 1021.</title>
        <authorList>
            <person name="Capela D."/>
            <person name="Barloy-Hubler F."/>
            <person name="Gouzy J."/>
            <person name="Bothe G."/>
            <person name="Ampe F."/>
            <person name="Batut J."/>
            <person name="Boistard P."/>
            <person name="Becker A."/>
            <person name="Boutry M."/>
            <person name="Cadieu E."/>
            <person name="Dreano S."/>
            <person name="Gloux S."/>
            <person name="Godrie T."/>
            <person name="Goffeau A."/>
            <person name="Kahn D."/>
            <person name="Kiss E."/>
            <person name="Lelaure V."/>
            <person name="Masuy D."/>
            <person name="Pohl T."/>
            <person name="Portetelle D."/>
            <person name="Puehler A."/>
            <person name="Purnelle B."/>
            <person name="Ramsperger U."/>
            <person name="Renard C."/>
            <person name="Thebault P."/>
            <person name="Vandenbol M."/>
            <person name="Weidner S."/>
            <person name="Galibert F."/>
        </authorList>
    </citation>
    <scope>NUCLEOTIDE SEQUENCE [LARGE SCALE GENOMIC DNA]</scope>
    <source>
        <strain>1021</strain>
    </source>
</reference>
<reference key="2">
    <citation type="journal article" date="2001" name="Science">
        <title>The composite genome of the legume symbiont Sinorhizobium meliloti.</title>
        <authorList>
            <person name="Galibert F."/>
            <person name="Finan T.M."/>
            <person name="Long S.R."/>
            <person name="Puehler A."/>
            <person name="Abola P."/>
            <person name="Ampe F."/>
            <person name="Barloy-Hubler F."/>
            <person name="Barnett M.J."/>
            <person name="Becker A."/>
            <person name="Boistard P."/>
            <person name="Bothe G."/>
            <person name="Boutry M."/>
            <person name="Bowser L."/>
            <person name="Buhrmester J."/>
            <person name="Cadieu E."/>
            <person name="Capela D."/>
            <person name="Chain P."/>
            <person name="Cowie A."/>
            <person name="Davis R.W."/>
            <person name="Dreano S."/>
            <person name="Federspiel N.A."/>
            <person name="Fisher R.F."/>
            <person name="Gloux S."/>
            <person name="Godrie T."/>
            <person name="Goffeau A."/>
            <person name="Golding B."/>
            <person name="Gouzy J."/>
            <person name="Gurjal M."/>
            <person name="Hernandez-Lucas I."/>
            <person name="Hong A."/>
            <person name="Huizar L."/>
            <person name="Hyman R.W."/>
            <person name="Jones T."/>
            <person name="Kahn D."/>
            <person name="Kahn M.L."/>
            <person name="Kalman S."/>
            <person name="Keating D.H."/>
            <person name="Kiss E."/>
            <person name="Komp C."/>
            <person name="Lelaure V."/>
            <person name="Masuy D."/>
            <person name="Palm C."/>
            <person name="Peck M.C."/>
            <person name="Pohl T.M."/>
            <person name="Portetelle D."/>
            <person name="Purnelle B."/>
            <person name="Ramsperger U."/>
            <person name="Surzycki R."/>
            <person name="Thebault P."/>
            <person name="Vandenbol M."/>
            <person name="Vorhoelter F.J."/>
            <person name="Weidner S."/>
            <person name="Wells D.H."/>
            <person name="Wong K."/>
            <person name="Yeh K.-C."/>
            <person name="Batut J."/>
        </authorList>
    </citation>
    <scope>NUCLEOTIDE SEQUENCE [LARGE SCALE GENOMIC DNA]</scope>
    <source>
        <strain>1021</strain>
    </source>
</reference>
<sequence>MQDLVIRRPDDWHLHLRDGGMLRGVIADTSRHFARAIIMPNLVPPVVTSADAAAYRERILAAIPAGDRFEPLMTLYLTEGTDPGDVEAGFRSGLVKAVKLYPAGATTNSSSGVRDIDKAMPVLERMAEIGLPLCVHGEVTTAEVDIFDREAVFIETVLDPLRRRLPDLRITMEHVTTKDGVDYIREHAANLAGSITTHHLIINRNAILVGGIKPHYYCLPVAKREAHRLALRQAAISGDVRFFLGTDSAPHVDPLKECACGCAGIYTSINTLSCLAHVFEEEGALDRLEAFTSLNGPAWYGLPANEETITLRKQEEPVSYPARIETEAGPVTVFDPMFPLHWAVTQA</sequence>
<dbReference type="EC" id="3.5.2.3" evidence="1"/>
<dbReference type="EMBL" id="AL591688">
    <property type="protein sequence ID" value="CAC41917.1"/>
    <property type="molecule type" value="Genomic_DNA"/>
</dbReference>
<dbReference type="RefSeq" id="NP_384586.1">
    <property type="nucleotide sequence ID" value="NC_003047.1"/>
</dbReference>
<dbReference type="RefSeq" id="WP_003531498.1">
    <property type="nucleotide sequence ID" value="NC_003047.1"/>
</dbReference>
<dbReference type="SMR" id="Q92SC7"/>
<dbReference type="MEROPS" id="M38.A02"/>
<dbReference type="EnsemblBacteria" id="CAC41917">
    <property type="protein sequence ID" value="CAC41917"/>
    <property type="gene ID" value="SMc02166"/>
</dbReference>
<dbReference type="KEGG" id="sme:SMc02166"/>
<dbReference type="PATRIC" id="fig|266834.11.peg.1857"/>
<dbReference type="eggNOG" id="COG0418">
    <property type="taxonomic scope" value="Bacteria"/>
</dbReference>
<dbReference type="HOGENOM" id="CLU_041558_1_0_5"/>
<dbReference type="OrthoDB" id="9808095at2"/>
<dbReference type="UniPathway" id="UPA00070">
    <property type="reaction ID" value="UER00117"/>
</dbReference>
<dbReference type="Proteomes" id="UP000001976">
    <property type="component" value="Chromosome"/>
</dbReference>
<dbReference type="GO" id="GO:0005829">
    <property type="term" value="C:cytosol"/>
    <property type="evidence" value="ECO:0007669"/>
    <property type="project" value="TreeGrafter"/>
</dbReference>
<dbReference type="GO" id="GO:0004151">
    <property type="term" value="F:dihydroorotase activity"/>
    <property type="evidence" value="ECO:0007669"/>
    <property type="project" value="UniProtKB-UniRule"/>
</dbReference>
<dbReference type="GO" id="GO:0008270">
    <property type="term" value="F:zinc ion binding"/>
    <property type="evidence" value="ECO:0007669"/>
    <property type="project" value="UniProtKB-UniRule"/>
</dbReference>
<dbReference type="GO" id="GO:0006207">
    <property type="term" value="P:'de novo' pyrimidine nucleobase biosynthetic process"/>
    <property type="evidence" value="ECO:0007669"/>
    <property type="project" value="TreeGrafter"/>
</dbReference>
<dbReference type="GO" id="GO:0044205">
    <property type="term" value="P:'de novo' UMP biosynthetic process"/>
    <property type="evidence" value="ECO:0007669"/>
    <property type="project" value="UniProtKB-UniRule"/>
</dbReference>
<dbReference type="CDD" id="cd01294">
    <property type="entry name" value="DHOase"/>
    <property type="match status" value="1"/>
</dbReference>
<dbReference type="Gene3D" id="3.20.20.140">
    <property type="entry name" value="Metal-dependent hydrolases"/>
    <property type="match status" value="1"/>
</dbReference>
<dbReference type="HAMAP" id="MF_00219">
    <property type="entry name" value="PyrC_classII"/>
    <property type="match status" value="1"/>
</dbReference>
<dbReference type="InterPro" id="IPR006680">
    <property type="entry name" value="Amidohydro-rel"/>
</dbReference>
<dbReference type="InterPro" id="IPR004721">
    <property type="entry name" value="DHOdimr"/>
</dbReference>
<dbReference type="InterPro" id="IPR002195">
    <property type="entry name" value="Dihydroorotase_CS"/>
</dbReference>
<dbReference type="InterPro" id="IPR032466">
    <property type="entry name" value="Metal_Hydrolase"/>
</dbReference>
<dbReference type="NCBIfam" id="TIGR00856">
    <property type="entry name" value="pyrC_dimer"/>
    <property type="match status" value="1"/>
</dbReference>
<dbReference type="PANTHER" id="PTHR43137">
    <property type="entry name" value="DIHYDROOROTASE"/>
    <property type="match status" value="1"/>
</dbReference>
<dbReference type="PANTHER" id="PTHR43137:SF1">
    <property type="entry name" value="DIHYDROOROTASE"/>
    <property type="match status" value="1"/>
</dbReference>
<dbReference type="Pfam" id="PF01979">
    <property type="entry name" value="Amidohydro_1"/>
    <property type="match status" value="1"/>
</dbReference>
<dbReference type="PIRSF" id="PIRSF001237">
    <property type="entry name" value="DHOdimr"/>
    <property type="match status" value="1"/>
</dbReference>
<dbReference type="SUPFAM" id="SSF51556">
    <property type="entry name" value="Metallo-dependent hydrolases"/>
    <property type="match status" value="1"/>
</dbReference>
<dbReference type="PROSITE" id="PS00482">
    <property type="entry name" value="DIHYDROOROTASE_1"/>
    <property type="match status" value="1"/>
</dbReference>
<dbReference type="PROSITE" id="PS00483">
    <property type="entry name" value="DIHYDROOROTASE_2"/>
    <property type="match status" value="1"/>
</dbReference>
<gene>
    <name evidence="1" type="primary">pyrC</name>
    <name type="ordered locus">R00480</name>
    <name type="ORF">SMc02166</name>
</gene>
<name>PYRC_RHIME</name>
<organism>
    <name type="scientific">Rhizobium meliloti (strain 1021)</name>
    <name type="common">Ensifer meliloti</name>
    <name type="synonym">Sinorhizobium meliloti</name>
    <dbReference type="NCBI Taxonomy" id="266834"/>
    <lineage>
        <taxon>Bacteria</taxon>
        <taxon>Pseudomonadati</taxon>
        <taxon>Pseudomonadota</taxon>
        <taxon>Alphaproteobacteria</taxon>
        <taxon>Hyphomicrobiales</taxon>
        <taxon>Rhizobiaceae</taxon>
        <taxon>Sinorhizobium/Ensifer group</taxon>
        <taxon>Sinorhizobium</taxon>
    </lineage>
</organism>
<feature type="chain" id="PRO_0000147216" description="Dihydroorotase">
    <location>
        <begin position="1"/>
        <end position="347"/>
    </location>
</feature>
<feature type="active site" evidence="1">
    <location>
        <position position="247"/>
    </location>
</feature>
<feature type="binding site" evidence="1">
    <location>
        <position position="13"/>
    </location>
    <ligand>
        <name>Zn(2+)</name>
        <dbReference type="ChEBI" id="CHEBI:29105"/>
        <label>1</label>
    </ligand>
</feature>
<feature type="binding site" evidence="1">
    <location>
        <begin position="15"/>
        <end position="17"/>
    </location>
    <ligand>
        <name>substrate</name>
    </ligand>
</feature>
<feature type="binding site" evidence="1">
    <location>
        <position position="15"/>
    </location>
    <ligand>
        <name>Zn(2+)</name>
        <dbReference type="ChEBI" id="CHEBI:29105"/>
        <label>1</label>
    </ligand>
</feature>
<feature type="binding site" evidence="1">
    <location>
        <position position="41"/>
    </location>
    <ligand>
        <name>substrate</name>
    </ligand>
</feature>
<feature type="binding site" description="via carbamate group" evidence="1">
    <location>
        <position position="99"/>
    </location>
    <ligand>
        <name>Zn(2+)</name>
        <dbReference type="ChEBI" id="CHEBI:29105"/>
        <label>1</label>
    </ligand>
</feature>
<feature type="binding site" description="via carbamate group" evidence="1">
    <location>
        <position position="99"/>
    </location>
    <ligand>
        <name>Zn(2+)</name>
        <dbReference type="ChEBI" id="CHEBI:29105"/>
        <label>2</label>
    </ligand>
</feature>
<feature type="binding site" evidence="1">
    <location>
        <position position="136"/>
    </location>
    <ligand>
        <name>substrate</name>
    </ligand>
</feature>
<feature type="binding site" evidence="1">
    <location>
        <position position="136"/>
    </location>
    <ligand>
        <name>Zn(2+)</name>
        <dbReference type="ChEBI" id="CHEBI:29105"/>
        <label>2</label>
    </ligand>
</feature>
<feature type="binding site" evidence="1">
    <location>
        <position position="174"/>
    </location>
    <ligand>
        <name>Zn(2+)</name>
        <dbReference type="ChEBI" id="CHEBI:29105"/>
        <label>2</label>
    </ligand>
</feature>
<feature type="binding site" evidence="1">
    <location>
        <position position="219"/>
    </location>
    <ligand>
        <name>substrate</name>
    </ligand>
</feature>
<feature type="binding site" evidence="1">
    <location>
        <position position="247"/>
    </location>
    <ligand>
        <name>Zn(2+)</name>
        <dbReference type="ChEBI" id="CHEBI:29105"/>
        <label>1</label>
    </ligand>
</feature>
<feature type="binding site" evidence="1">
    <location>
        <position position="251"/>
    </location>
    <ligand>
        <name>substrate</name>
    </ligand>
</feature>
<feature type="binding site" evidence="1">
    <location>
        <position position="263"/>
    </location>
    <ligand>
        <name>substrate</name>
    </ligand>
</feature>
<feature type="modified residue" description="N6-carboxylysine" evidence="1">
    <location>
        <position position="99"/>
    </location>
</feature>
<comment type="function">
    <text evidence="1">Catalyzes the reversible cyclization of carbamoyl aspartate to dihydroorotate.</text>
</comment>
<comment type="catalytic activity">
    <reaction evidence="1">
        <text>(S)-dihydroorotate + H2O = N-carbamoyl-L-aspartate + H(+)</text>
        <dbReference type="Rhea" id="RHEA:24296"/>
        <dbReference type="ChEBI" id="CHEBI:15377"/>
        <dbReference type="ChEBI" id="CHEBI:15378"/>
        <dbReference type="ChEBI" id="CHEBI:30864"/>
        <dbReference type="ChEBI" id="CHEBI:32814"/>
        <dbReference type="EC" id="3.5.2.3"/>
    </reaction>
</comment>
<comment type="cofactor">
    <cofactor evidence="1">
        <name>Zn(2+)</name>
        <dbReference type="ChEBI" id="CHEBI:29105"/>
    </cofactor>
    <text evidence="1">Binds 2 Zn(2+) ions per subunit.</text>
</comment>
<comment type="pathway">
    <text evidence="1">Pyrimidine metabolism; UMP biosynthesis via de novo pathway; (S)-dihydroorotate from bicarbonate: step 3/3.</text>
</comment>
<comment type="subunit">
    <text evidence="1">Homodimer.</text>
</comment>
<comment type="similarity">
    <text evidence="1">Belongs to the metallo-dependent hydrolases superfamily. DHOase family. Class II DHOase subfamily.</text>
</comment>
<protein>
    <recommendedName>
        <fullName evidence="1">Dihydroorotase</fullName>
        <shortName evidence="1">DHOase</shortName>
        <ecNumber evidence="1">3.5.2.3</ecNumber>
    </recommendedName>
</protein>
<accession>Q92SC7</accession>
<evidence type="ECO:0000255" key="1">
    <source>
        <dbReference type="HAMAP-Rule" id="MF_00219"/>
    </source>
</evidence>